<comment type="function">
    <text evidence="1">One of the primary rRNA binding proteins, it binds directly to 16S rRNA where it nucleates assembly of the body of the 30S subunit.</text>
</comment>
<comment type="function">
    <text evidence="1">With S5 and S12 plays an important role in translational accuracy.</text>
</comment>
<comment type="subunit">
    <text evidence="1">Part of the 30S ribosomal subunit. Contacts protein S5. The interaction surface between S4 and S5 is involved in control of translational fidelity.</text>
</comment>
<comment type="similarity">
    <text evidence="1">Belongs to the universal ribosomal protein uS4 family.</text>
</comment>
<accession>A0RJP7</accession>
<proteinExistence type="inferred from homology"/>
<protein>
    <recommendedName>
        <fullName evidence="1">Small ribosomal subunit protein uS4</fullName>
    </recommendedName>
    <alternativeName>
        <fullName evidence="3">30S ribosomal protein S4</fullName>
    </alternativeName>
</protein>
<gene>
    <name evidence="1" type="primary">rpsD</name>
    <name type="ordered locus">BALH_4233</name>
</gene>
<organism>
    <name type="scientific">Bacillus thuringiensis (strain Al Hakam)</name>
    <dbReference type="NCBI Taxonomy" id="412694"/>
    <lineage>
        <taxon>Bacteria</taxon>
        <taxon>Bacillati</taxon>
        <taxon>Bacillota</taxon>
        <taxon>Bacilli</taxon>
        <taxon>Bacillales</taxon>
        <taxon>Bacillaceae</taxon>
        <taxon>Bacillus</taxon>
        <taxon>Bacillus cereus group</taxon>
    </lineage>
</organism>
<feature type="chain" id="PRO_0000293242" description="Small ribosomal subunit protein uS4">
    <location>
        <begin position="1"/>
        <end position="200"/>
    </location>
</feature>
<feature type="domain" description="S4 RNA-binding" evidence="1">
    <location>
        <begin position="92"/>
        <end position="152"/>
    </location>
</feature>
<feature type="region of interest" description="Disordered" evidence="2">
    <location>
        <begin position="22"/>
        <end position="42"/>
    </location>
</feature>
<sequence length="200" mass="22996">MARYTGPAWKLSRRLGISLSGTGKELEKRPYAPGPHGPNQRKKLSEYGLQLQEKQKLRHMYGMTERQFRRTFDQAGKMPGKHGENFMILLEARLDNLVYRMGLARTRRAARQLVNHGHIMVDGARVDIPSYRVKPGQTISVREKSNNLVVVKEAIEVNNFVPEYLTFDADKLEATYTRHAERAELPAEINEALIVEFYSR</sequence>
<name>RS4_BACAH</name>
<evidence type="ECO:0000255" key="1">
    <source>
        <dbReference type="HAMAP-Rule" id="MF_01306"/>
    </source>
</evidence>
<evidence type="ECO:0000256" key="2">
    <source>
        <dbReference type="SAM" id="MobiDB-lite"/>
    </source>
</evidence>
<evidence type="ECO:0000305" key="3"/>
<reference key="1">
    <citation type="journal article" date="2007" name="J. Bacteriol.">
        <title>The complete genome sequence of Bacillus thuringiensis Al Hakam.</title>
        <authorList>
            <person name="Challacombe J.F."/>
            <person name="Altherr M.R."/>
            <person name="Xie G."/>
            <person name="Bhotika S.S."/>
            <person name="Brown N."/>
            <person name="Bruce D."/>
            <person name="Campbell C.S."/>
            <person name="Campbell M.L."/>
            <person name="Chen J."/>
            <person name="Chertkov O."/>
            <person name="Cleland C."/>
            <person name="Dimitrijevic M."/>
            <person name="Doggett N.A."/>
            <person name="Fawcett J.J."/>
            <person name="Glavina T."/>
            <person name="Goodwin L.A."/>
            <person name="Green L.D."/>
            <person name="Han C.S."/>
            <person name="Hill K.K."/>
            <person name="Hitchcock P."/>
            <person name="Jackson P.J."/>
            <person name="Keim P."/>
            <person name="Kewalramani A.R."/>
            <person name="Longmire J."/>
            <person name="Lucas S."/>
            <person name="Malfatti S."/>
            <person name="Martinez D."/>
            <person name="McMurry K."/>
            <person name="Meincke L.J."/>
            <person name="Misra M."/>
            <person name="Moseman B.L."/>
            <person name="Mundt M."/>
            <person name="Munk A.C."/>
            <person name="Okinaka R.T."/>
            <person name="Parson-Quintana B."/>
            <person name="Reilly L.P."/>
            <person name="Richardson P."/>
            <person name="Robinson D.L."/>
            <person name="Saunders E."/>
            <person name="Tapia R."/>
            <person name="Tesmer J.G."/>
            <person name="Thayer N."/>
            <person name="Thompson L.S."/>
            <person name="Tice H."/>
            <person name="Ticknor L.O."/>
            <person name="Wills P.L."/>
            <person name="Gilna P."/>
            <person name="Brettin T.S."/>
        </authorList>
    </citation>
    <scope>NUCLEOTIDE SEQUENCE [LARGE SCALE GENOMIC DNA]</scope>
    <source>
        <strain>Al Hakam</strain>
    </source>
</reference>
<keyword id="KW-0687">Ribonucleoprotein</keyword>
<keyword id="KW-0689">Ribosomal protein</keyword>
<keyword id="KW-0694">RNA-binding</keyword>
<keyword id="KW-0699">rRNA-binding</keyword>
<dbReference type="EMBL" id="CP000485">
    <property type="protein sequence ID" value="ABK87440.1"/>
    <property type="molecule type" value="Genomic_DNA"/>
</dbReference>
<dbReference type="RefSeq" id="WP_000135311.1">
    <property type="nucleotide sequence ID" value="NC_008600.1"/>
</dbReference>
<dbReference type="SMR" id="A0RJP7"/>
<dbReference type="GeneID" id="83638371"/>
<dbReference type="KEGG" id="btl:BALH_4233"/>
<dbReference type="HOGENOM" id="CLU_092403_0_1_9"/>
<dbReference type="GO" id="GO:0015935">
    <property type="term" value="C:small ribosomal subunit"/>
    <property type="evidence" value="ECO:0007669"/>
    <property type="project" value="InterPro"/>
</dbReference>
<dbReference type="GO" id="GO:0019843">
    <property type="term" value="F:rRNA binding"/>
    <property type="evidence" value="ECO:0007669"/>
    <property type="project" value="UniProtKB-UniRule"/>
</dbReference>
<dbReference type="GO" id="GO:0003735">
    <property type="term" value="F:structural constituent of ribosome"/>
    <property type="evidence" value="ECO:0007669"/>
    <property type="project" value="InterPro"/>
</dbReference>
<dbReference type="GO" id="GO:0042274">
    <property type="term" value="P:ribosomal small subunit biogenesis"/>
    <property type="evidence" value="ECO:0007669"/>
    <property type="project" value="TreeGrafter"/>
</dbReference>
<dbReference type="GO" id="GO:0006412">
    <property type="term" value="P:translation"/>
    <property type="evidence" value="ECO:0007669"/>
    <property type="project" value="UniProtKB-UniRule"/>
</dbReference>
<dbReference type="CDD" id="cd00165">
    <property type="entry name" value="S4"/>
    <property type="match status" value="1"/>
</dbReference>
<dbReference type="FunFam" id="1.10.1050.10:FF:000001">
    <property type="entry name" value="30S ribosomal protein S4"/>
    <property type="match status" value="1"/>
</dbReference>
<dbReference type="FunFam" id="3.10.290.10:FF:000001">
    <property type="entry name" value="30S ribosomal protein S4"/>
    <property type="match status" value="1"/>
</dbReference>
<dbReference type="Gene3D" id="1.10.1050.10">
    <property type="entry name" value="Ribosomal Protein S4 Delta 41, Chain A, domain 1"/>
    <property type="match status" value="1"/>
</dbReference>
<dbReference type="Gene3D" id="3.10.290.10">
    <property type="entry name" value="RNA-binding S4 domain"/>
    <property type="match status" value="1"/>
</dbReference>
<dbReference type="HAMAP" id="MF_01306_B">
    <property type="entry name" value="Ribosomal_uS4_B"/>
    <property type="match status" value="1"/>
</dbReference>
<dbReference type="InterPro" id="IPR022801">
    <property type="entry name" value="Ribosomal_uS4"/>
</dbReference>
<dbReference type="InterPro" id="IPR005709">
    <property type="entry name" value="Ribosomal_uS4_bac-type"/>
</dbReference>
<dbReference type="InterPro" id="IPR018079">
    <property type="entry name" value="Ribosomal_uS4_CS"/>
</dbReference>
<dbReference type="InterPro" id="IPR001912">
    <property type="entry name" value="Ribosomal_uS4_N"/>
</dbReference>
<dbReference type="InterPro" id="IPR002942">
    <property type="entry name" value="S4_RNA-bd"/>
</dbReference>
<dbReference type="InterPro" id="IPR036986">
    <property type="entry name" value="S4_RNA-bd_sf"/>
</dbReference>
<dbReference type="NCBIfam" id="NF003717">
    <property type="entry name" value="PRK05327.1"/>
    <property type="match status" value="1"/>
</dbReference>
<dbReference type="NCBIfam" id="TIGR01017">
    <property type="entry name" value="rpsD_bact"/>
    <property type="match status" value="1"/>
</dbReference>
<dbReference type="PANTHER" id="PTHR11831">
    <property type="entry name" value="30S 40S RIBOSOMAL PROTEIN"/>
    <property type="match status" value="1"/>
</dbReference>
<dbReference type="PANTHER" id="PTHR11831:SF4">
    <property type="entry name" value="SMALL RIBOSOMAL SUBUNIT PROTEIN US4M"/>
    <property type="match status" value="1"/>
</dbReference>
<dbReference type="Pfam" id="PF00163">
    <property type="entry name" value="Ribosomal_S4"/>
    <property type="match status" value="1"/>
</dbReference>
<dbReference type="Pfam" id="PF01479">
    <property type="entry name" value="S4"/>
    <property type="match status" value="1"/>
</dbReference>
<dbReference type="SMART" id="SM01390">
    <property type="entry name" value="Ribosomal_S4"/>
    <property type="match status" value="1"/>
</dbReference>
<dbReference type="SMART" id="SM00363">
    <property type="entry name" value="S4"/>
    <property type="match status" value="1"/>
</dbReference>
<dbReference type="SUPFAM" id="SSF55174">
    <property type="entry name" value="Alpha-L RNA-binding motif"/>
    <property type="match status" value="1"/>
</dbReference>
<dbReference type="PROSITE" id="PS00632">
    <property type="entry name" value="RIBOSOMAL_S4"/>
    <property type="match status" value="1"/>
</dbReference>
<dbReference type="PROSITE" id="PS50889">
    <property type="entry name" value="S4"/>
    <property type="match status" value="1"/>
</dbReference>